<keyword id="KW-0150">Chloroplast</keyword>
<keyword id="KW-0903">Direct protein sequencing</keyword>
<keyword id="KW-0934">Plastid</keyword>
<keyword id="KW-0793">Thylakoid</keyword>
<comment type="subcellular location">
    <subcellularLocation>
        <location evidence="1">Plastid</location>
        <location evidence="1">Chloroplast thylakoid</location>
    </subcellularLocation>
</comment>
<comment type="miscellaneous">
    <text evidence="1">On the 2D-gel the determined pI of this protein is: 5.5, its MW is: 27.4 kDa.</text>
</comment>
<name>UT115_PEA</name>
<sequence length="14" mass="1461">SPTEQPYSSAAPLI</sequence>
<accession>P82332</accession>
<organism>
    <name type="scientific">Pisum sativum</name>
    <name type="common">Garden pea</name>
    <name type="synonym">Lathyrus oleraceus</name>
    <dbReference type="NCBI Taxonomy" id="3888"/>
    <lineage>
        <taxon>Eukaryota</taxon>
        <taxon>Viridiplantae</taxon>
        <taxon>Streptophyta</taxon>
        <taxon>Embryophyta</taxon>
        <taxon>Tracheophyta</taxon>
        <taxon>Spermatophyta</taxon>
        <taxon>Magnoliopsida</taxon>
        <taxon>eudicotyledons</taxon>
        <taxon>Gunneridae</taxon>
        <taxon>Pentapetalae</taxon>
        <taxon>rosids</taxon>
        <taxon>fabids</taxon>
        <taxon>Fabales</taxon>
        <taxon>Fabaceae</taxon>
        <taxon>Papilionoideae</taxon>
        <taxon>50 kb inversion clade</taxon>
        <taxon>NPAAA clade</taxon>
        <taxon>Hologalegina</taxon>
        <taxon>IRL clade</taxon>
        <taxon>Fabeae</taxon>
        <taxon>Pisum</taxon>
    </lineage>
</organism>
<feature type="chain" id="PRO_0000234476" description="Unknown protein from spot 115 of 2D-PAGE of thylakoid">
    <location>
        <begin position="1" status="less than"/>
        <end position="14" status="greater than"/>
    </location>
</feature>
<feature type="unsure residue" description="Q or K" evidence="1">
    <location>
        <position position="5"/>
    </location>
</feature>
<feature type="unsure residue" description="L or I" evidence="1">
    <location>
        <position position="13"/>
    </location>
</feature>
<feature type="unsure residue" description="I or L" evidence="1">
    <location>
        <position position="14"/>
    </location>
</feature>
<feature type="non-consecutive residues" evidence="2">
    <location>
        <begin position="6"/>
        <end position="7"/>
    </location>
</feature>
<feature type="non-terminal residue" evidence="2">
    <location>
        <position position="1"/>
    </location>
</feature>
<feature type="non-terminal residue" evidence="2">
    <location>
        <position position="14"/>
    </location>
</feature>
<evidence type="ECO:0000269" key="1">
    <source>
    </source>
</evidence>
<evidence type="ECO:0000303" key="2">
    <source>
    </source>
</evidence>
<evidence type="ECO:0000305" key="3"/>
<proteinExistence type="evidence at protein level"/>
<protein>
    <recommendedName>
        <fullName>Unknown protein from spot 115 of 2D-PAGE of thylakoid</fullName>
    </recommendedName>
</protein>
<dbReference type="GO" id="GO:0009534">
    <property type="term" value="C:chloroplast thylakoid"/>
    <property type="evidence" value="ECO:0007669"/>
    <property type="project" value="UniProtKB-SubCell"/>
</dbReference>
<reference evidence="3" key="1">
    <citation type="journal article" date="2000" name="Plant Cell">
        <title>Proteomics of the chloroplast: systematic identification and targeting analysis of lumenal and peripheral thylakoid proteins.</title>
        <authorList>
            <person name="Peltier J.-B."/>
            <person name="Friso G."/>
            <person name="Kalume D.E."/>
            <person name="Roepstorff P."/>
            <person name="Nilsson F."/>
            <person name="Adamska I."/>
            <person name="van Wijk K.J."/>
        </authorList>
    </citation>
    <scope>PROTEIN SEQUENCE</scope>
    <scope>SUBCELLULAR LOCATION</scope>
    <source>
        <strain evidence="1">cv. De Grace</strain>
        <tissue evidence="1">Leaf</tissue>
    </source>
</reference>